<sequence length="418" mass="46259">MRLNSSAPGTPGTPAADPFQRAQAGLEEALLAPGFGNASGNASERVLAAPSSELDVNTDIYSKVLVTAVYLALFVVGTVGNTVTAFTLARKKSLQSLQSTVHYHLGSLALSDLLTLLLAMPVELYNFIWVHHPWAFGDAGCRGYYFLRDACTYATALNVASLSVERYLAICHPFKAKTLMSRSRTKKFISAIWLASALLAVPMLFTMGEQNRSADGQHAGGLVCTPTIHTATVKVVIQVNTFMSFIFPMVVISVLNTIIANKLTVMVRQAAEQGQVCTVGGEHSTFSMAIEPGRVQALRHGVRVLRAVVIAFVVCWLPYHVRRLMFCYISDEQWTPFLYDFYHYFYMVTNALFYVSSTINPILYNLVSANFRHIFLATLACLCPVWRRRRKRPAFSRKADSVSSNHTLSSNATRETLY</sequence>
<proteinExistence type="evidence at protein level"/>
<comment type="function">
    <text evidence="6 7 8">G-protein coupled receptor for the tridecapeptide neurotensin (NTS) (PubMed:21725197, PubMed:23140271, PubMed:8381365). Signaling is effected via G proteins that activate a phosphatidylinositol-calcium second messenger system. Signaling leads to the activation of downstream MAP kinases and protects cells against apoptosis (PubMed:21725197).</text>
</comment>
<comment type="subunit">
    <text evidence="6 7">Interacts (palmitoylated form) with GNA11.</text>
</comment>
<comment type="interaction">
    <interactant intactId="EBI-6655774">
        <id>P30989</id>
    </interactant>
    <interactant intactId="EBI-6655799">
        <id>P30990</id>
        <label>NTS</label>
    </interactant>
    <organismsDiffer>false</organismsDiffer>
    <experiments>2</experiments>
</comment>
<comment type="interaction">
    <interactant intactId="EBI-6655774">
        <id>P30989</id>
    </interactant>
    <interactant intactId="EBI-6655817">
        <id>PRO_0000019524</id>
        <label>NTS</label>
        <dbReference type="UniProtKB" id="P30990"/>
    </interactant>
    <organismsDiffer>false</organismsDiffer>
    <experiments>2</experiments>
</comment>
<comment type="interaction">
    <interactant intactId="EBI-6655774">
        <id>P30989</id>
    </interactant>
    <interactant intactId="EBI-6655774">
        <id>P30989</id>
        <label>NTSR1</label>
    </interactant>
    <organismsDiffer>false</organismsDiffer>
    <experiments>2</experiments>
</comment>
<comment type="subcellular location">
    <subcellularLocation>
        <location evidence="8">Cell membrane</location>
        <topology evidence="9">Multi-pass membrane protein</topology>
    </subcellularLocation>
    <subcellularLocation>
        <location evidence="6">Membrane raft</location>
    </subcellularLocation>
    <text evidence="6">Palmitoylation is required for localization at CAV1-enriched membrane rafts.</text>
</comment>
<comment type="tissue specificity">
    <text evidence="5 8">Expressed in prostate (at protein level). Detected in colon and peripheral blood mononuclear cells. Detected at very low levels in brain.</text>
</comment>
<comment type="domain">
    <text evidence="2">The ligand binding pocket consists mainly of extracellular loops ECL2 and ECL3, as well as transmembrane regions TM6 and TM7.</text>
</comment>
<comment type="PTM">
    <text evidence="6">N-glycosylated.</text>
</comment>
<comment type="PTM">
    <text evidence="6">Palmitoylated; this is required for normal localization at membrane rafts and normal GNA11-mediated activation of down-stream signaling cascades. The palmitoylation level increases in response to neurotensin treatment.</text>
</comment>
<comment type="similarity">
    <text evidence="4">Belongs to the G-protein coupled receptor 1 family. Neurotensin receptor subfamily. NTSR1 sub-subfamily.</text>
</comment>
<comment type="online information" name="Wikipedia">
    <link uri="https://en.wikipedia.org/wiki/Neurotensin_receptor"/>
    <text>Neurotensin receptor entry</text>
</comment>
<name>NTR1_HUMAN</name>
<protein>
    <recommendedName>
        <fullName>Neurotensin receptor type 1</fullName>
        <shortName>NT-R-1</shortName>
        <shortName>NTR1</shortName>
    </recommendedName>
    <alternativeName>
        <fullName>High-affinity levocabastine-insensitive neurotensin receptor</fullName>
    </alternativeName>
    <alternativeName>
        <fullName>NTRH</fullName>
    </alternativeName>
</protein>
<gene>
    <name type="primary">NTSR1</name>
    <name type="synonym">NTRR</name>
</gene>
<accession>P30989</accession>
<accession>Q9H4H1</accession>
<accession>Q9H4T5</accession>
<evidence type="ECO:0000250" key="1"/>
<evidence type="ECO:0000250" key="2">
    <source>
        <dbReference type="UniProtKB" id="P20789"/>
    </source>
</evidence>
<evidence type="ECO:0000255" key="3"/>
<evidence type="ECO:0000255" key="4">
    <source>
        <dbReference type="PROSITE-ProRule" id="PRU00521"/>
    </source>
</evidence>
<evidence type="ECO:0000269" key="5">
    <source>
    </source>
</evidence>
<evidence type="ECO:0000269" key="6">
    <source>
    </source>
</evidence>
<evidence type="ECO:0000269" key="7">
    <source>
    </source>
</evidence>
<evidence type="ECO:0000269" key="8">
    <source>
    </source>
</evidence>
<evidence type="ECO:0000305" key="9"/>
<evidence type="ECO:0000305" key="10">
    <source>
    </source>
</evidence>
<evidence type="ECO:0007829" key="11">
    <source>
        <dbReference type="PDB" id="6OS9"/>
    </source>
</evidence>
<evidence type="ECO:0007829" key="12">
    <source>
        <dbReference type="PDB" id="6OSA"/>
    </source>
</evidence>
<evidence type="ECO:0007829" key="13">
    <source>
        <dbReference type="PDB" id="7UL2"/>
    </source>
</evidence>
<reference key="1">
    <citation type="journal article" date="1993" name="FEBS Lett.">
        <title>Cloning and expression of a complementary DNA encoding a high affinity human neurotensin receptor.</title>
        <authorList>
            <person name="Vita N."/>
            <person name="Laurent P."/>
            <person name="Lefort S."/>
            <person name="Chalon P."/>
            <person name="Dumont X."/>
            <person name="Kaghad M."/>
            <person name="Gully D."/>
            <person name="le Fur G."/>
            <person name="Ferrara P."/>
            <person name="Caput D."/>
        </authorList>
    </citation>
    <scope>NUCLEOTIDE SEQUENCE [MRNA]</scope>
    <scope>FUNCTION</scope>
    <scope>SUBCELLULAR LOCATION</scope>
    <scope>TISSUE SPECIFICITY</scope>
</reference>
<reference key="2">
    <citation type="submission" date="2003-10" db="EMBL/GenBank/DDBJ databases">
        <title>cDNA clones of human proteins involved in signal transduction sequenced by the Guthrie cDNA resource center (www.cdna.org).</title>
        <authorList>
            <person name="Kopatz S.A."/>
            <person name="Aronstam R.S."/>
            <person name="Sharma S.V."/>
        </authorList>
    </citation>
    <scope>NUCLEOTIDE SEQUENCE [LARGE SCALE MRNA]</scope>
    <source>
        <tissue>Brain</tissue>
    </source>
</reference>
<reference key="3">
    <citation type="journal article" date="2001" name="Nature">
        <title>The DNA sequence and comparative analysis of human chromosome 20.</title>
        <authorList>
            <person name="Deloukas P."/>
            <person name="Matthews L.H."/>
            <person name="Ashurst J.L."/>
            <person name="Burton J."/>
            <person name="Gilbert J.G.R."/>
            <person name="Jones M."/>
            <person name="Stavrides G."/>
            <person name="Almeida J.P."/>
            <person name="Babbage A.K."/>
            <person name="Bagguley C.L."/>
            <person name="Bailey J."/>
            <person name="Barlow K.F."/>
            <person name="Bates K.N."/>
            <person name="Beard L.M."/>
            <person name="Beare D.M."/>
            <person name="Beasley O.P."/>
            <person name="Bird C.P."/>
            <person name="Blakey S.E."/>
            <person name="Bridgeman A.M."/>
            <person name="Brown A.J."/>
            <person name="Buck D."/>
            <person name="Burrill W.D."/>
            <person name="Butler A.P."/>
            <person name="Carder C."/>
            <person name="Carter N.P."/>
            <person name="Chapman J.C."/>
            <person name="Clamp M."/>
            <person name="Clark G."/>
            <person name="Clark L.N."/>
            <person name="Clark S.Y."/>
            <person name="Clee C.M."/>
            <person name="Clegg S."/>
            <person name="Cobley V.E."/>
            <person name="Collier R.E."/>
            <person name="Connor R.E."/>
            <person name="Corby N.R."/>
            <person name="Coulson A."/>
            <person name="Coville G.J."/>
            <person name="Deadman R."/>
            <person name="Dhami P.D."/>
            <person name="Dunn M."/>
            <person name="Ellington A.G."/>
            <person name="Frankland J.A."/>
            <person name="Fraser A."/>
            <person name="French L."/>
            <person name="Garner P."/>
            <person name="Grafham D.V."/>
            <person name="Griffiths C."/>
            <person name="Griffiths M.N.D."/>
            <person name="Gwilliam R."/>
            <person name="Hall R.E."/>
            <person name="Hammond S."/>
            <person name="Harley J.L."/>
            <person name="Heath P.D."/>
            <person name="Ho S."/>
            <person name="Holden J.L."/>
            <person name="Howden P.J."/>
            <person name="Huckle E."/>
            <person name="Hunt A.R."/>
            <person name="Hunt S.E."/>
            <person name="Jekosch K."/>
            <person name="Johnson C.M."/>
            <person name="Johnson D."/>
            <person name="Kay M.P."/>
            <person name="Kimberley A.M."/>
            <person name="King A."/>
            <person name="Knights A."/>
            <person name="Laird G.K."/>
            <person name="Lawlor S."/>
            <person name="Lehvaeslaiho M.H."/>
            <person name="Leversha M.A."/>
            <person name="Lloyd C."/>
            <person name="Lloyd D.M."/>
            <person name="Lovell J.D."/>
            <person name="Marsh V.L."/>
            <person name="Martin S.L."/>
            <person name="McConnachie L.J."/>
            <person name="McLay K."/>
            <person name="McMurray A.A."/>
            <person name="Milne S.A."/>
            <person name="Mistry D."/>
            <person name="Moore M.J.F."/>
            <person name="Mullikin J.C."/>
            <person name="Nickerson T."/>
            <person name="Oliver K."/>
            <person name="Parker A."/>
            <person name="Patel R."/>
            <person name="Pearce T.A.V."/>
            <person name="Peck A.I."/>
            <person name="Phillimore B.J.C.T."/>
            <person name="Prathalingam S.R."/>
            <person name="Plumb R.W."/>
            <person name="Ramsay H."/>
            <person name="Rice C.M."/>
            <person name="Ross M.T."/>
            <person name="Scott C.E."/>
            <person name="Sehra H.K."/>
            <person name="Shownkeen R."/>
            <person name="Sims S."/>
            <person name="Skuce C.D."/>
            <person name="Smith M.L."/>
            <person name="Soderlund C."/>
            <person name="Steward C.A."/>
            <person name="Sulston J.E."/>
            <person name="Swann R.M."/>
            <person name="Sycamore N."/>
            <person name="Taylor R."/>
            <person name="Tee L."/>
            <person name="Thomas D.W."/>
            <person name="Thorpe A."/>
            <person name="Tracey A."/>
            <person name="Tromans A.C."/>
            <person name="Vaudin M."/>
            <person name="Wall M."/>
            <person name="Wallis J.M."/>
            <person name="Whitehead S.L."/>
            <person name="Whittaker P."/>
            <person name="Willey D.L."/>
            <person name="Williams L."/>
            <person name="Williams S.A."/>
            <person name="Wilming L."/>
            <person name="Wray P.W."/>
            <person name="Hubbard T."/>
            <person name="Durbin R.M."/>
            <person name="Bentley D.R."/>
            <person name="Beck S."/>
            <person name="Rogers J."/>
        </authorList>
    </citation>
    <scope>NUCLEOTIDE SEQUENCE [LARGE SCALE GENOMIC DNA]</scope>
</reference>
<reference key="4">
    <citation type="journal article" date="2010" name="Cancer Res.">
        <title>Altered expression of neurotensin receptors is associated with the differentiation state of prostate cancer.</title>
        <authorList>
            <person name="Swift S.L."/>
            <person name="Burns J.E."/>
            <person name="Maitland N.J."/>
        </authorList>
    </citation>
    <scope>TISSUE SPECIFICITY</scope>
</reference>
<reference key="5">
    <citation type="journal article" date="2011" name="Cancer Biol. Ther.">
        <title>Neurotensin receptor-1 inducible palmitoylation is required for efficient receptor-mediated mitogenic-signaling within structured membrane microdomains.</title>
        <authorList>
            <person name="Heakal Y."/>
            <person name="Woll M.P."/>
            <person name="Fox T."/>
            <person name="Seaton K."/>
            <person name="Levenson R."/>
            <person name="Kester M."/>
        </authorList>
    </citation>
    <scope>FUNCTION</scope>
    <scope>INTERACTION WITH GNA11</scope>
    <scope>PALMITOYLATION AT CYS-381 AND CYS-383</scope>
    <scope>SUBCELLULAR LOCATION</scope>
    <scope>GLYCOSYLATION</scope>
    <scope>MUTAGENESIS OF CYS-381 AND CYS-383</scope>
</reference>
<reference key="6">
    <citation type="journal article" date="2013" name="J. Biomol. Struct. Dyn.">
        <title>Intermolecular interactions between the neurotensin and the third extracellular loop of human neurotensin 1 receptor.</title>
        <authorList>
            <person name="Da Costa G."/>
            <person name="Bondon A."/>
            <person name="Coutant J."/>
            <person name="Curmi P."/>
            <person name="Monti J.P."/>
        </authorList>
    </citation>
    <scope>STRUCTURE BY NMR OF 321-344 IN COMPLEX WITH NTS</scope>
    <scope>FUNCTION</scope>
</reference>
<feature type="chain" id="PRO_0000069946" description="Neurotensin receptor type 1">
    <location>
        <begin position="1"/>
        <end position="418"/>
    </location>
</feature>
<feature type="topological domain" description="Extracellular" evidence="2">
    <location>
        <begin position="1"/>
        <end position="67"/>
    </location>
</feature>
<feature type="transmembrane region" description="Helical; Name=1" evidence="2">
    <location>
        <begin position="68"/>
        <end position="88"/>
    </location>
</feature>
<feature type="topological domain" description="Cytoplasmic" evidence="2">
    <location>
        <begin position="89"/>
        <end position="102"/>
    </location>
</feature>
<feature type="transmembrane region" description="Helical; Name=2" evidence="2">
    <location>
        <begin position="103"/>
        <end position="122"/>
    </location>
</feature>
<feature type="topological domain" description="Extracellular" evidence="2">
    <location>
        <begin position="123"/>
        <end position="142"/>
    </location>
</feature>
<feature type="transmembrane region" description="Helical; Name=3" evidence="2">
    <location>
        <begin position="143"/>
        <end position="164"/>
    </location>
</feature>
<feature type="topological domain" description="Cytoplasmic" evidence="2">
    <location>
        <begin position="165"/>
        <end position="184"/>
    </location>
</feature>
<feature type="transmembrane region" description="Helical; Name=4" evidence="2">
    <location>
        <begin position="185"/>
        <end position="205"/>
    </location>
</feature>
<feature type="topological domain" description="Extracellular" evidence="2">
    <location>
        <begin position="206"/>
        <end position="234"/>
    </location>
</feature>
<feature type="transmembrane region" description="Helical; Name=5" evidence="2">
    <location>
        <begin position="235"/>
        <end position="259"/>
    </location>
</feature>
<feature type="topological domain" description="Cytoplasmic" evidence="2">
    <location>
        <begin position="260"/>
        <end position="303"/>
    </location>
</feature>
<feature type="transmembrane region" description="Helical; Name=6" evidence="2">
    <location>
        <begin position="304"/>
        <end position="325"/>
    </location>
</feature>
<feature type="topological domain" description="Extracellular" evidence="2">
    <location>
        <begin position="326"/>
        <end position="343"/>
    </location>
</feature>
<feature type="transmembrane region" description="Helical; Name=7" evidence="2">
    <location>
        <begin position="344"/>
        <end position="364"/>
    </location>
</feature>
<feature type="topological domain" description="Cytoplasmic" evidence="2">
    <location>
        <begin position="365"/>
        <end position="418"/>
    </location>
</feature>
<feature type="region of interest" description="Neurotensin binding" evidence="1">
    <location>
        <begin position="321"/>
        <end position="344"/>
    </location>
</feature>
<feature type="lipid moiety-binding region" description="S-palmitoyl cysteine" evidence="10">
    <location>
        <position position="381"/>
    </location>
</feature>
<feature type="lipid moiety-binding region" description="S-palmitoyl cysteine" evidence="10">
    <location>
        <position position="383"/>
    </location>
</feature>
<feature type="glycosylation site" description="N-linked (GlcNAc...) asparagine" evidence="3">
    <location>
        <position position="4"/>
    </location>
</feature>
<feature type="glycosylation site" description="N-linked (GlcNAc...) asparagine" evidence="3">
    <location>
        <position position="37"/>
    </location>
</feature>
<feature type="glycosylation site" description="N-linked (GlcNAc...) asparagine" evidence="3">
    <location>
        <position position="41"/>
    </location>
</feature>
<feature type="disulfide bond" evidence="4">
    <location>
        <begin position="141"/>
        <end position="224"/>
    </location>
</feature>
<feature type="sequence variant" id="VAR_059328" description="In dbSNP:rs11698783.">
    <original>A</original>
    <variation>V</variation>
    <location>
        <position position="72"/>
    </location>
</feature>
<feature type="sequence variant" id="VAR_049424" description="In dbSNP:rs35373650.">
    <original>Q</original>
    <variation>H</variation>
    <location>
        <position position="275"/>
    </location>
</feature>
<feature type="sequence variant" id="VAR_020071" description="In dbSNP:rs2273075.">
    <original>V</original>
    <variation>I</variation>
    <location>
        <position position="304"/>
    </location>
</feature>
<feature type="mutagenesis site" description="Abolishes palmitoylation; when associated with S-383." evidence="6">
    <original>C</original>
    <variation>S</variation>
    <location>
        <position position="381"/>
    </location>
</feature>
<feature type="mutagenesis site" description="Abolishes palmitoylation; when associated with S-381." evidence="6">
    <original>C</original>
    <variation>S</variation>
    <location>
        <position position="383"/>
    </location>
</feature>
<feature type="sequence conflict" description="In Ref. 1; CAA49675." evidence="9" ref="1">
    <original>A</original>
    <variation>T</variation>
    <location>
        <position position="200"/>
    </location>
</feature>
<feature type="helix" evidence="11">
    <location>
        <begin position="52"/>
        <end position="54"/>
    </location>
</feature>
<feature type="helix" evidence="13">
    <location>
        <begin position="61"/>
        <end position="89"/>
    </location>
</feature>
<feature type="helix" evidence="13">
    <location>
        <begin position="100"/>
        <end position="117"/>
    </location>
</feature>
<feature type="helix" evidence="13">
    <location>
        <begin position="119"/>
        <end position="126"/>
    </location>
</feature>
<feature type="turn" evidence="13">
    <location>
        <begin position="127"/>
        <end position="129"/>
    </location>
</feature>
<feature type="turn" evidence="12">
    <location>
        <begin position="131"/>
        <end position="133"/>
    </location>
</feature>
<feature type="helix" evidence="13">
    <location>
        <begin position="137"/>
        <end position="171"/>
    </location>
</feature>
<feature type="helix" evidence="13">
    <location>
        <begin position="173"/>
        <end position="179"/>
    </location>
</feature>
<feature type="helix" evidence="13">
    <location>
        <begin position="182"/>
        <end position="199"/>
    </location>
</feature>
<feature type="helix" evidence="13">
    <location>
        <begin position="201"/>
        <end position="206"/>
    </location>
</feature>
<feature type="strand" evidence="13">
    <location>
        <begin position="207"/>
        <end position="212"/>
    </location>
</feature>
<feature type="strand" evidence="11">
    <location>
        <begin position="213"/>
        <end position="216"/>
    </location>
</feature>
<feature type="strand" evidence="13">
    <location>
        <begin position="221"/>
        <end position="226"/>
    </location>
</feature>
<feature type="helix" evidence="13">
    <location>
        <begin position="230"/>
        <end position="244"/>
    </location>
</feature>
<feature type="helix" evidence="13">
    <location>
        <begin position="246"/>
        <end position="255"/>
    </location>
</feature>
<feature type="helix" evidence="13">
    <location>
        <begin position="307"/>
        <end position="328"/>
    </location>
</feature>
<feature type="turn" evidence="11">
    <location>
        <begin position="331"/>
        <end position="333"/>
    </location>
</feature>
<feature type="helix" evidence="13">
    <location>
        <begin position="336"/>
        <end position="367"/>
    </location>
</feature>
<feature type="helix" evidence="13">
    <location>
        <begin position="369"/>
        <end position="378"/>
    </location>
</feature>
<organism>
    <name type="scientific">Homo sapiens</name>
    <name type="common">Human</name>
    <dbReference type="NCBI Taxonomy" id="9606"/>
    <lineage>
        <taxon>Eukaryota</taxon>
        <taxon>Metazoa</taxon>
        <taxon>Chordata</taxon>
        <taxon>Craniata</taxon>
        <taxon>Vertebrata</taxon>
        <taxon>Euteleostomi</taxon>
        <taxon>Mammalia</taxon>
        <taxon>Eutheria</taxon>
        <taxon>Euarchontoglires</taxon>
        <taxon>Primates</taxon>
        <taxon>Haplorrhini</taxon>
        <taxon>Catarrhini</taxon>
        <taxon>Hominidae</taxon>
        <taxon>Homo</taxon>
    </lineage>
</organism>
<keyword id="KW-0002">3D-structure</keyword>
<keyword id="KW-1003">Cell membrane</keyword>
<keyword id="KW-1015">Disulfide bond</keyword>
<keyword id="KW-0297">G-protein coupled receptor</keyword>
<keyword id="KW-0325">Glycoprotein</keyword>
<keyword id="KW-0449">Lipoprotein</keyword>
<keyword id="KW-0472">Membrane</keyword>
<keyword id="KW-0564">Palmitate</keyword>
<keyword id="KW-1267">Proteomics identification</keyword>
<keyword id="KW-0675">Receptor</keyword>
<keyword id="KW-1185">Reference proteome</keyword>
<keyword id="KW-0807">Transducer</keyword>
<keyword id="KW-0812">Transmembrane</keyword>
<keyword id="KW-1133">Transmembrane helix</keyword>
<dbReference type="EMBL" id="X70070">
    <property type="protein sequence ID" value="CAA49675.1"/>
    <property type="molecule type" value="mRNA"/>
</dbReference>
<dbReference type="EMBL" id="AY429106">
    <property type="protein sequence ID" value="AAR07901.1"/>
    <property type="molecule type" value="mRNA"/>
</dbReference>
<dbReference type="EMBL" id="AL035669">
    <property type="status" value="NOT_ANNOTATED_CDS"/>
    <property type="molecule type" value="Genomic_DNA"/>
</dbReference>
<dbReference type="EMBL" id="AL357033">
    <property type="status" value="NOT_ANNOTATED_CDS"/>
    <property type="molecule type" value="Genomic_DNA"/>
</dbReference>
<dbReference type="CCDS" id="CCDS13502.1"/>
<dbReference type="PIR" id="S29506">
    <property type="entry name" value="S29506"/>
</dbReference>
<dbReference type="RefSeq" id="NP_002522.2">
    <property type="nucleotide sequence ID" value="NM_002531.3"/>
</dbReference>
<dbReference type="PDB" id="2LYW">
    <property type="method" value="NMR"/>
    <property type="chains" value="A=321-344"/>
</dbReference>
<dbReference type="PDB" id="6OS9">
    <property type="method" value="EM"/>
    <property type="resolution" value="3.00 A"/>
    <property type="chains" value="R=20-418"/>
</dbReference>
<dbReference type="PDB" id="6OSA">
    <property type="method" value="EM"/>
    <property type="resolution" value="3.00 A"/>
    <property type="chains" value="R=20-418"/>
</dbReference>
<dbReference type="PDB" id="6PWC">
    <property type="method" value="EM"/>
    <property type="resolution" value="4.90 A"/>
    <property type="chains" value="R=49-418"/>
</dbReference>
<dbReference type="PDB" id="6UP7">
    <property type="method" value="EM"/>
    <property type="resolution" value="4.20 A"/>
    <property type="chains" value="R=50-383"/>
</dbReference>
<dbReference type="PDB" id="7UL2">
    <property type="method" value="EM"/>
    <property type="resolution" value="2.40 A"/>
    <property type="chains" value="R=20-255, R=307-418"/>
</dbReference>
<dbReference type="PDB" id="8JPB">
    <property type="method" value="EM"/>
    <property type="resolution" value="3.07 A"/>
    <property type="chains" value="R=1-418"/>
</dbReference>
<dbReference type="PDB" id="8JPC">
    <property type="method" value="EM"/>
    <property type="resolution" value="3.07 A"/>
    <property type="chains" value="R=1-418"/>
</dbReference>
<dbReference type="PDB" id="8JPF">
    <property type="method" value="EM"/>
    <property type="resolution" value="3.02 A"/>
    <property type="chains" value="R=1-418"/>
</dbReference>
<dbReference type="PDBsum" id="2LYW"/>
<dbReference type="PDBsum" id="6OS9"/>
<dbReference type="PDBsum" id="6OSA"/>
<dbReference type="PDBsum" id="6PWC"/>
<dbReference type="PDBsum" id="6UP7"/>
<dbReference type="PDBsum" id="7UL2"/>
<dbReference type="PDBsum" id="8JPB"/>
<dbReference type="PDBsum" id="8JPC"/>
<dbReference type="PDBsum" id="8JPF"/>
<dbReference type="EMDB" id="EMD-20180"/>
<dbReference type="EMDB" id="EMD-20181"/>
<dbReference type="EMDB" id="EMD-20505"/>
<dbReference type="EMDB" id="EMD-20836"/>
<dbReference type="EMDB" id="EMD-26589"/>
<dbReference type="EMDB" id="EMD-36474"/>
<dbReference type="EMDB" id="EMD-36475"/>
<dbReference type="EMDB" id="EMD-36478"/>
<dbReference type="SMR" id="P30989"/>
<dbReference type="BioGRID" id="110977">
    <property type="interactions" value="119"/>
</dbReference>
<dbReference type="CORUM" id="P30989"/>
<dbReference type="DIP" id="DIP-60977N"/>
<dbReference type="FunCoup" id="P30989">
    <property type="interactions" value="954"/>
</dbReference>
<dbReference type="IntAct" id="P30989">
    <property type="interactions" value="61"/>
</dbReference>
<dbReference type="STRING" id="9606.ENSP00000359532"/>
<dbReference type="BindingDB" id="P30989"/>
<dbReference type="ChEMBL" id="CHEMBL4123"/>
<dbReference type="DrugBank" id="DB06455">
    <property type="generic name" value="Meclinertant"/>
</dbReference>
<dbReference type="GuidetoPHARMACOLOGY" id="309"/>
<dbReference type="TCDB" id="9.A.14.1.14">
    <property type="family name" value="the g-protein-coupled receptor (gpcr) family"/>
</dbReference>
<dbReference type="GlyCosmos" id="P30989">
    <property type="glycosylation" value="3 sites, No reported glycans"/>
</dbReference>
<dbReference type="GlyGen" id="P30989">
    <property type="glycosylation" value="7 sites"/>
</dbReference>
<dbReference type="iPTMnet" id="P30989"/>
<dbReference type="PhosphoSitePlus" id="P30989"/>
<dbReference type="SwissPalm" id="P30989"/>
<dbReference type="BioMuta" id="NTSR1"/>
<dbReference type="DMDM" id="62297312"/>
<dbReference type="jPOST" id="P30989"/>
<dbReference type="MassIVE" id="P30989"/>
<dbReference type="PaxDb" id="9606-ENSP00000359532"/>
<dbReference type="PeptideAtlas" id="P30989"/>
<dbReference type="ProteomicsDB" id="54755"/>
<dbReference type="Antibodypedia" id="1519">
    <property type="antibodies" value="331 antibodies from 32 providers"/>
</dbReference>
<dbReference type="DNASU" id="4923"/>
<dbReference type="Ensembl" id="ENST00000370501.4">
    <property type="protein sequence ID" value="ENSP00000359532.3"/>
    <property type="gene ID" value="ENSG00000101188.5"/>
</dbReference>
<dbReference type="GeneID" id="4923"/>
<dbReference type="KEGG" id="hsa:4923"/>
<dbReference type="MANE-Select" id="ENST00000370501.4">
    <property type="protein sequence ID" value="ENSP00000359532.3"/>
    <property type="RefSeq nucleotide sequence ID" value="NM_002531.3"/>
    <property type="RefSeq protein sequence ID" value="NP_002522.2"/>
</dbReference>
<dbReference type="UCSC" id="uc002ydf.3">
    <property type="organism name" value="human"/>
</dbReference>
<dbReference type="AGR" id="HGNC:8039"/>
<dbReference type="CTD" id="4923"/>
<dbReference type="DisGeNET" id="4923"/>
<dbReference type="GeneCards" id="NTSR1"/>
<dbReference type="HGNC" id="HGNC:8039">
    <property type="gene designation" value="NTSR1"/>
</dbReference>
<dbReference type="HPA" id="ENSG00000101188">
    <property type="expression patterns" value="Tissue enriched (intestine)"/>
</dbReference>
<dbReference type="MIM" id="162651">
    <property type="type" value="gene"/>
</dbReference>
<dbReference type="neXtProt" id="NX_P30989"/>
<dbReference type="OpenTargets" id="ENSG00000101188"/>
<dbReference type="PharmGKB" id="PA31821"/>
<dbReference type="VEuPathDB" id="HostDB:ENSG00000101188"/>
<dbReference type="eggNOG" id="KOG3656">
    <property type="taxonomic scope" value="Eukaryota"/>
</dbReference>
<dbReference type="GeneTree" id="ENSGT01120000271823"/>
<dbReference type="HOGENOM" id="CLU_009579_6_5_1"/>
<dbReference type="InParanoid" id="P30989"/>
<dbReference type="OMA" id="CLCPLWG"/>
<dbReference type="OrthoDB" id="9835116at2759"/>
<dbReference type="PAN-GO" id="P30989">
    <property type="GO annotations" value="3 GO annotations based on evolutionary models"/>
</dbReference>
<dbReference type="PhylomeDB" id="P30989"/>
<dbReference type="TreeFam" id="TF337167"/>
<dbReference type="PathwayCommons" id="P30989"/>
<dbReference type="Reactome" id="R-HSA-375276">
    <property type="pathway name" value="Peptide ligand-binding receptors"/>
</dbReference>
<dbReference type="Reactome" id="R-HSA-416476">
    <property type="pathway name" value="G alpha (q) signalling events"/>
</dbReference>
<dbReference type="SignaLink" id="P30989"/>
<dbReference type="SIGNOR" id="P30989"/>
<dbReference type="BioGRID-ORCS" id="4923">
    <property type="hits" value="18 hits in 1147 CRISPR screens"/>
</dbReference>
<dbReference type="EvolutionaryTrace" id="P30989"/>
<dbReference type="GeneWiki" id="Neurotensin_receptor_1"/>
<dbReference type="GenomeRNAi" id="4923"/>
<dbReference type="Pharos" id="P30989">
    <property type="development level" value="Tchem"/>
</dbReference>
<dbReference type="PRO" id="PR:P30989"/>
<dbReference type="Proteomes" id="UP000005640">
    <property type="component" value="Chromosome 20"/>
</dbReference>
<dbReference type="RNAct" id="P30989">
    <property type="molecule type" value="protein"/>
</dbReference>
<dbReference type="Bgee" id="ENSG00000101188">
    <property type="expression patterns" value="Expressed in muscle layer of sigmoid colon and 80 other cell types or tissues"/>
</dbReference>
<dbReference type="GO" id="GO:0009986">
    <property type="term" value="C:cell surface"/>
    <property type="evidence" value="ECO:0007669"/>
    <property type="project" value="Ensembl"/>
</dbReference>
<dbReference type="GO" id="GO:0009898">
    <property type="term" value="C:cytoplasmic side of plasma membrane"/>
    <property type="evidence" value="ECO:0007669"/>
    <property type="project" value="Ensembl"/>
</dbReference>
<dbReference type="GO" id="GO:0043198">
    <property type="term" value="C:dendritic shaft"/>
    <property type="evidence" value="ECO:0007669"/>
    <property type="project" value="Ensembl"/>
</dbReference>
<dbReference type="GO" id="GO:0043197">
    <property type="term" value="C:dendritic spine"/>
    <property type="evidence" value="ECO:0007669"/>
    <property type="project" value="Ensembl"/>
</dbReference>
<dbReference type="GO" id="GO:0005783">
    <property type="term" value="C:endoplasmic reticulum"/>
    <property type="evidence" value="ECO:0000304"/>
    <property type="project" value="ProtInc"/>
</dbReference>
<dbReference type="GO" id="GO:0005794">
    <property type="term" value="C:Golgi apparatus"/>
    <property type="evidence" value="ECO:0000304"/>
    <property type="project" value="ProtInc"/>
</dbReference>
<dbReference type="GO" id="GO:0045121">
    <property type="term" value="C:membrane raft"/>
    <property type="evidence" value="ECO:0000314"/>
    <property type="project" value="UniProtKB"/>
</dbReference>
<dbReference type="GO" id="GO:0043204">
    <property type="term" value="C:perikaryon"/>
    <property type="evidence" value="ECO:0007669"/>
    <property type="project" value="Ensembl"/>
</dbReference>
<dbReference type="GO" id="GO:0005886">
    <property type="term" value="C:plasma membrane"/>
    <property type="evidence" value="ECO:0000315"/>
    <property type="project" value="UniProtKB"/>
</dbReference>
<dbReference type="GO" id="GO:0032280">
    <property type="term" value="C:symmetric synapse"/>
    <property type="evidence" value="ECO:0007669"/>
    <property type="project" value="Ensembl"/>
</dbReference>
<dbReference type="GO" id="GO:0043195">
    <property type="term" value="C:terminal bouton"/>
    <property type="evidence" value="ECO:0007669"/>
    <property type="project" value="Ensembl"/>
</dbReference>
<dbReference type="GO" id="GO:0016492">
    <property type="term" value="F:G protein-coupled neurotensin receptor activity"/>
    <property type="evidence" value="ECO:0000314"/>
    <property type="project" value="UniProtKB"/>
</dbReference>
<dbReference type="GO" id="GO:0004930">
    <property type="term" value="F:G protein-coupled receptor activity"/>
    <property type="evidence" value="ECO:0000304"/>
    <property type="project" value="ProtInc"/>
</dbReference>
<dbReference type="GO" id="GO:0042802">
    <property type="term" value="F:identical protein binding"/>
    <property type="evidence" value="ECO:0000353"/>
    <property type="project" value="IntAct"/>
</dbReference>
<dbReference type="GO" id="GO:0044877">
    <property type="term" value="F:protein-containing complex binding"/>
    <property type="evidence" value="ECO:0007669"/>
    <property type="project" value="Ensembl"/>
</dbReference>
<dbReference type="GO" id="GO:0008344">
    <property type="term" value="P:adult locomotory behavior"/>
    <property type="evidence" value="ECO:0007669"/>
    <property type="project" value="Ensembl"/>
</dbReference>
<dbReference type="GO" id="GO:0007268">
    <property type="term" value="P:chemical synaptic transmission"/>
    <property type="evidence" value="ECO:0000304"/>
    <property type="project" value="ProtInc"/>
</dbReference>
<dbReference type="GO" id="GO:0070779">
    <property type="term" value="P:D-aspartate import across plasma membrane"/>
    <property type="evidence" value="ECO:0007669"/>
    <property type="project" value="Ensembl"/>
</dbReference>
<dbReference type="GO" id="GO:0050965">
    <property type="term" value="P:detection of temperature stimulus involved in sensory perception of pain"/>
    <property type="evidence" value="ECO:0007669"/>
    <property type="project" value="Ensembl"/>
</dbReference>
<dbReference type="GO" id="GO:0007186">
    <property type="term" value="P:G protein-coupled receptor signaling pathway"/>
    <property type="evidence" value="ECO:0000304"/>
    <property type="project" value="ProtInc"/>
</dbReference>
<dbReference type="GO" id="GO:0071545">
    <property type="term" value="P:inositol phosphate catabolic process"/>
    <property type="evidence" value="ECO:0007669"/>
    <property type="project" value="Ensembl"/>
</dbReference>
<dbReference type="GO" id="GO:0098712">
    <property type="term" value="P:L-glutamate import across plasma membrane"/>
    <property type="evidence" value="ECO:0007669"/>
    <property type="project" value="Ensembl"/>
</dbReference>
<dbReference type="GO" id="GO:0007612">
    <property type="term" value="P:learning"/>
    <property type="evidence" value="ECO:0007669"/>
    <property type="project" value="Ensembl"/>
</dbReference>
<dbReference type="GO" id="GO:0043066">
    <property type="term" value="P:negative regulation of apoptotic process"/>
    <property type="evidence" value="ECO:0000315"/>
    <property type="project" value="UniProtKB"/>
</dbReference>
<dbReference type="GO" id="GO:0051280">
    <property type="term" value="P:negative regulation of release of sequestered calcium ion into cytosol"/>
    <property type="evidence" value="ECO:0007669"/>
    <property type="project" value="Ensembl"/>
</dbReference>
<dbReference type="GO" id="GO:0003085">
    <property type="term" value="P:negative regulation of systemic arterial blood pressure"/>
    <property type="evidence" value="ECO:0007669"/>
    <property type="project" value="Ensembl"/>
</dbReference>
<dbReference type="GO" id="GO:0007218">
    <property type="term" value="P:neuropeptide signaling pathway"/>
    <property type="evidence" value="ECO:0000314"/>
    <property type="project" value="UniProtKB"/>
</dbReference>
<dbReference type="GO" id="GO:0043065">
    <property type="term" value="P:positive regulation of apoptotic process"/>
    <property type="evidence" value="ECO:0007669"/>
    <property type="project" value="Ensembl"/>
</dbReference>
<dbReference type="GO" id="GO:0090238">
    <property type="term" value="P:positive regulation of arachidonate secretion"/>
    <property type="evidence" value="ECO:0007669"/>
    <property type="project" value="Ensembl"/>
</dbReference>
<dbReference type="GO" id="GO:0014054">
    <property type="term" value="P:positive regulation of gamma-aminobutyric acid secretion"/>
    <property type="evidence" value="ECO:0007669"/>
    <property type="project" value="Ensembl"/>
</dbReference>
<dbReference type="GO" id="GO:0010628">
    <property type="term" value="P:positive regulation of gene expression"/>
    <property type="evidence" value="ECO:0000316"/>
    <property type="project" value="ARUK-UCL"/>
</dbReference>
<dbReference type="GO" id="GO:0014049">
    <property type="term" value="P:positive regulation of glutamate secretion"/>
    <property type="evidence" value="ECO:0007669"/>
    <property type="project" value="Ensembl"/>
</dbReference>
<dbReference type="GO" id="GO:0097151">
    <property type="term" value="P:positive regulation of inhibitory postsynaptic potential"/>
    <property type="evidence" value="ECO:0007669"/>
    <property type="project" value="Ensembl"/>
</dbReference>
<dbReference type="GO" id="GO:0060732">
    <property type="term" value="P:positive regulation of inositol phosphate biosynthetic process"/>
    <property type="evidence" value="ECO:0007669"/>
    <property type="project" value="Ensembl"/>
</dbReference>
<dbReference type="GO" id="GO:0051281">
    <property type="term" value="P:positive regulation of release of sequestered calcium ion into cytosol"/>
    <property type="evidence" value="ECO:0007669"/>
    <property type="project" value="Ensembl"/>
</dbReference>
<dbReference type="GO" id="GO:0003254">
    <property type="term" value="P:regulation of membrane depolarization"/>
    <property type="evidence" value="ECO:0007669"/>
    <property type="project" value="Ensembl"/>
</dbReference>
<dbReference type="GO" id="GO:0043576">
    <property type="term" value="P:regulation of respiratory gaseous exchange"/>
    <property type="evidence" value="ECO:0007669"/>
    <property type="project" value="Ensembl"/>
</dbReference>
<dbReference type="GO" id="GO:0033993">
    <property type="term" value="P:response to lipid"/>
    <property type="evidence" value="ECO:0007669"/>
    <property type="project" value="Ensembl"/>
</dbReference>
<dbReference type="GO" id="GO:0001659">
    <property type="term" value="P:temperature homeostasis"/>
    <property type="evidence" value="ECO:0007669"/>
    <property type="project" value="Ensembl"/>
</dbReference>
<dbReference type="CDD" id="cd15355">
    <property type="entry name" value="7tmA_NTSR1"/>
    <property type="match status" value="1"/>
</dbReference>
<dbReference type="FunFam" id="1.20.1070.10:FF:000217">
    <property type="entry name" value="neurotensin receptor type 1"/>
    <property type="match status" value="1"/>
</dbReference>
<dbReference type="Gene3D" id="1.20.1070.10">
    <property type="entry name" value="Rhodopsin 7-helix transmembrane proteins"/>
    <property type="match status" value="1"/>
</dbReference>
<dbReference type="InterPro" id="IPR000276">
    <property type="entry name" value="GPCR_Rhodpsn"/>
</dbReference>
<dbReference type="InterPro" id="IPR017452">
    <property type="entry name" value="GPCR_Rhodpsn_7TM"/>
</dbReference>
<dbReference type="InterPro" id="IPR003985">
    <property type="entry name" value="NT1_rcpt"/>
</dbReference>
<dbReference type="InterPro" id="IPR003984">
    <property type="entry name" value="NT_rcpt"/>
</dbReference>
<dbReference type="PANTHER" id="PTHR24243">
    <property type="entry name" value="G-PROTEIN COUPLED RECEPTOR"/>
    <property type="match status" value="1"/>
</dbReference>
<dbReference type="PANTHER" id="PTHR24243:SF9">
    <property type="entry name" value="NEUROTENSIN RECEPTOR TYPE 1"/>
    <property type="match status" value="1"/>
</dbReference>
<dbReference type="Pfam" id="PF00001">
    <property type="entry name" value="7tm_1"/>
    <property type="match status" value="1"/>
</dbReference>
<dbReference type="PRINTS" id="PR00237">
    <property type="entry name" value="GPCRRHODOPSN"/>
</dbReference>
<dbReference type="PRINTS" id="PR01479">
    <property type="entry name" value="NEUROTENSINR"/>
</dbReference>
<dbReference type="PRINTS" id="PR01480">
    <property type="entry name" value="NEUROTENSN1R"/>
</dbReference>
<dbReference type="SUPFAM" id="SSF81321">
    <property type="entry name" value="Family A G protein-coupled receptor-like"/>
    <property type="match status" value="1"/>
</dbReference>
<dbReference type="PROSITE" id="PS00237">
    <property type="entry name" value="G_PROTEIN_RECEP_F1_1"/>
    <property type="match status" value="1"/>
</dbReference>
<dbReference type="PROSITE" id="PS50262">
    <property type="entry name" value="G_PROTEIN_RECEP_F1_2"/>
    <property type="match status" value="1"/>
</dbReference>